<dbReference type="EMBL" id="AB027146">
    <property type="protein sequence ID" value="BAA98053.1"/>
    <property type="molecule type" value="mRNA"/>
</dbReference>
<dbReference type="RefSeq" id="NP_446382.1">
    <property type="nucleotide sequence ID" value="NM_053930.4"/>
</dbReference>
<dbReference type="SMR" id="Q9JJM7"/>
<dbReference type="BioGRID" id="250594">
    <property type="interactions" value="1"/>
</dbReference>
<dbReference type="FunCoup" id="Q9JJM7">
    <property type="interactions" value="104"/>
</dbReference>
<dbReference type="STRING" id="10116.ENSRNOP00000043041"/>
<dbReference type="iPTMnet" id="Q9JJM7"/>
<dbReference type="PhosphoSitePlus" id="Q9JJM7"/>
<dbReference type="PaxDb" id="10116-ENSRNOP00000043041"/>
<dbReference type="Ensembl" id="ENSRNOT00000040954.5">
    <property type="protein sequence ID" value="ENSRNOP00000043041.3"/>
    <property type="gene ID" value="ENSRNOG00000046981.3"/>
</dbReference>
<dbReference type="GeneID" id="116727"/>
<dbReference type="KEGG" id="rno:116727"/>
<dbReference type="AGR" id="RGD:621050"/>
<dbReference type="CTD" id="2812"/>
<dbReference type="RGD" id="621050">
    <property type="gene designation" value="Gp1bb"/>
</dbReference>
<dbReference type="eggNOG" id="KOG0619">
    <property type="taxonomic scope" value="Eukaryota"/>
</dbReference>
<dbReference type="GeneTree" id="ENSGT00530000064244"/>
<dbReference type="HOGENOM" id="CLU_094615_0_0_1"/>
<dbReference type="InParanoid" id="Q9JJM7"/>
<dbReference type="OMA" id="CPVPCKC"/>
<dbReference type="OrthoDB" id="676979at2759"/>
<dbReference type="Reactome" id="R-RNO-140837">
    <property type="pathway name" value="Intrinsic Pathway of Fibrin Clot Formation"/>
</dbReference>
<dbReference type="Reactome" id="R-RNO-430116">
    <property type="pathway name" value="GP1b-IX-V activation signalling"/>
</dbReference>
<dbReference type="Reactome" id="R-RNO-76009">
    <property type="pathway name" value="Platelet Aggregation (Plug Formation)"/>
</dbReference>
<dbReference type="PRO" id="PR:Q9JJM7"/>
<dbReference type="Proteomes" id="UP000002494">
    <property type="component" value="Chromosome 11"/>
</dbReference>
<dbReference type="Bgee" id="ENSRNOG00000046981">
    <property type="expression patterns" value="Expressed in spleen and 4 other cell types or tissues"/>
</dbReference>
<dbReference type="GO" id="GO:1990779">
    <property type="term" value="C:glycoprotein Ib-IX-V complex"/>
    <property type="evidence" value="ECO:0000266"/>
    <property type="project" value="RGD"/>
</dbReference>
<dbReference type="GO" id="GO:0042802">
    <property type="term" value="F:identical protein binding"/>
    <property type="evidence" value="ECO:0000266"/>
    <property type="project" value="RGD"/>
</dbReference>
<dbReference type="GO" id="GO:0007596">
    <property type="term" value="P:blood coagulation"/>
    <property type="evidence" value="ECO:0000266"/>
    <property type="project" value="RGD"/>
</dbReference>
<dbReference type="GO" id="GO:0007597">
    <property type="term" value="P:blood coagulation, intrinsic pathway"/>
    <property type="evidence" value="ECO:0000266"/>
    <property type="project" value="RGD"/>
</dbReference>
<dbReference type="GO" id="GO:0007155">
    <property type="term" value="P:cell adhesion"/>
    <property type="evidence" value="ECO:0007669"/>
    <property type="project" value="UniProtKB-KW"/>
</dbReference>
<dbReference type="GO" id="GO:0035855">
    <property type="term" value="P:megakaryocyte development"/>
    <property type="evidence" value="ECO:0000266"/>
    <property type="project" value="RGD"/>
</dbReference>
<dbReference type="GO" id="GO:0010572">
    <property type="term" value="P:positive regulation of platelet activation"/>
    <property type="evidence" value="ECO:0000266"/>
    <property type="project" value="RGD"/>
</dbReference>
<dbReference type="GO" id="GO:0051209">
    <property type="term" value="P:release of sequestered calcium ion into cytosol"/>
    <property type="evidence" value="ECO:0000266"/>
    <property type="project" value="RGD"/>
</dbReference>
<dbReference type="Gene3D" id="3.80.10.10">
    <property type="entry name" value="Ribonuclease Inhibitor"/>
    <property type="match status" value="1"/>
</dbReference>
<dbReference type="InterPro" id="IPR000483">
    <property type="entry name" value="Cys-rich_flank_reg_C"/>
</dbReference>
<dbReference type="InterPro" id="IPR052313">
    <property type="entry name" value="GPIb-IX-V_Complex"/>
</dbReference>
<dbReference type="InterPro" id="IPR032675">
    <property type="entry name" value="LRR_dom_sf"/>
</dbReference>
<dbReference type="InterPro" id="IPR000372">
    <property type="entry name" value="LRRNT"/>
</dbReference>
<dbReference type="PANTHER" id="PTHR22650">
    <property type="entry name" value="GLYCOPROTEIN IB BETA"/>
    <property type="match status" value="1"/>
</dbReference>
<dbReference type="PANTHER" id="PTHR22650:SF7">
    <property type="entry name" value="PLATELET GLYCOPROTEIN IB BETA CHAIN"/>
    <property type="match status" value="1"/>
</dbReference>
<dbReference type="Pfam" id="PF01462">
    <property type="entry name" value="LRRNT"/>
    <property type="match status" value="1"/>
</dbReference>
<dbReference type="SMART" id="SM00082">
    <property type="entry name" value="LRRCT"/>
    <property type="match status" value="1"/>
</dbReference>
<dbReference type="SMART" id="SM00013">
    <property type="entry name" value="LRRNT"/>
    <property type="match status" value="1"/>
</dbReference>
<dbReference type="SUPFAM" id="SSF52058">
    <property type="entry name" value="L domain-like"/>
    <property type="match status" value="1"/>
</dbReference>
<comment type="function">
    <text evidence="1">Gp-Ib, a surface membrane protein of platelets, participates in the formation of platelet plugs by binding to von Willebrand factor, which is already bound to the subendothelium.</text>
</comment>
<comment type="subunit">
    <text evidence="1">Two GP-Ib beta are disulfide-linked to one GP-Ib alpha. GP-IX is complexed with the GP-Ib heterodimer via a non covalent linkage. Interacts with TRAF4 (By similarity).</text>
</comment>
<comment type="subcellular location">
    <subcellularLocation>
        <location evidence="5">Membrane</location>
        <topology evidence="5">Single-pass type I membrane protein</topology>
    </subcellularLocation>
</comment>
<comment type="miscellaneous">
    <text evidence="1">Platelet activation apparently involves disruption of the macromolecular complex of GP-Ib with the platelet glycoprotein IX (GP-IX) and dissociation of GP-Ib from the actin-binding protein.</text>
</comment>
<accession>Q9JJM7</accession>
<protein>
    <recommendedName>
        <fullName>Platelet glycoprotein Ib beta chain</fullName>
        <shortName>GP-Ib beta</shortName>
        <shortName>GPIb-beta</shortName>
        <shortName>GPIbB</shortName>
    </recommendedName>
    <cdAntigenName>CD42c</cdAntigenName>
</protein>
<reference key="1">
    <citation type="journal article" date="2000" name="Biochem. Biophys. Res. Commun.">
        <title>Reciprocal expression of infant- and adult preferring transcripts of CDCrel-1 septin in the rat neocortex.</title>
        <authorList>
            <person name="Tada S."/>
            <person name="Kajii Y."/>
            <person name="Sato M."/>
            <person name="Nishikawa T."/>
        </authorList>
    </citation>
    <scope>NUCLEOTIDE SEQUENCE [MRNA]</scope>
    <source>
        <strain>Wistar</strain>
        <tissue>Brain cortex</tissue>
    </source>
</reference>
<reference key="2">
    <citation type="journal article" date="2012" name="Nat. Commun.">
        <title>Quantitative maps of protein phosphorylation sites across 14 different rat organs and tissues.</title>
        <authorList>
            <person name="Lundby A."/>
            <person name="Secher A."/>
            <person name="Lage K."/>
            <person name="Nordsborg N.B."/>
            <person name="Dmytriyev A."/>
            <person name="Lundby C."/>
            <person name="Olsen J.V."/>
        </authorList>
    </citation>
    <scope>IDENTIFICATION BY MASS SPECTROMETRY [LARGE SCALE ANALYSIS]</scope>
</reference>
<sequence length="206" mass="22175">MGSRPRGALSLLLLLLAPPSRPASGCPAPCRCSETRVDCGRRGLTWASLPAAFPPDTTELVLTDNNLTALPPGLLDTLPALRRVHLGANPWRCDCRLLPLRAWLAGRPEREFYRDLRCVAPLALRGRLLPYVAEDELRAACAPGLLCWGALVAQLALLVLGLLHALLLALLLSRLRRLRAQARARSTREFSLTAPLVAESAGGGAS</sequence>
<evidence type="ECO:0000250" key="1"/>
<evidence type="ECO:0000250" key="2">
    <source>
        <dbReference type="UniProtKB" id="P13224"/>
    </source>
</evidence>
<evidence type="ECO:0000250" key="3">
    <source>
        <dbReference type="UniProtKB" id="P56400"/>
    </source>
</evidence>
<evidence type="ECO:0000255" key="4"/>
<evidence type="ECO:0000305" key="5"/>
<organism>
    <name type="scientific">Rattus norvegicus</name>
    <name type="common">Rat</name>
    <dbReference type="NCBI Taxonomy" id="10116"/>
    <lineage>
        <taxon>Eukaryota</taxon>
        <taxon>Metazoa</taxon>
        <taxon>Chordata</taxon>
        <taxon>Craniata</taxon>
        <taxon>Vertebrata</taxon>
        <taxon>Euteleostomi</taxon>
        <taxon>Mammalia</taxon>
        <taxon>Eutheria</taxon>
        <taxon>Euarchontoglires</taxon>
        <taxon>Glires</taxon>
        <taxon>Rodentia</taxon>
        <taxon>Myomorpha</taxon>
        <taxon>Muroidea</taxon>
        <taxon>Muridae</taxon>
        <taxon>Murinae</taxon>
        <taxon>Rattus</taxon>
    </lineage>
</organism>
<keyword id="KW-0094">Blood coagulation</keyword>
<keyword id="KW-0130">Cell adhesion</keyword>
<keyword id="KW-1015">Disulfide bond</keyword>
<keyword id="KW-0356">Hemostasis</keyword>
<keyword id="KW-0433">Leucine-rich repeat</keyword>
<keyword id="KW-0472">Membrane</keyword>
<keyword id="KW-0597">Phosphoprotein</keyword>
<keyword id="KW-1185">Reference proteome</keyword>
<keyword id="KW-0732">Signal</keyword>
<keyword id="KW-0812">Transmembrane</keyword>
<keyword id="KW-1133">Transmembrane helix</keyword>
<name>GP1BB_RAT</name>
<gene>
    <name type="primary">Gp1bb</name>
</gene>
<proteinExistence type="evidence at protein level"/>
<feature type="signal peptide" evidence="1">
    <location>
        <begin position="1"/>
        <end position="26"/>
    </location>
</feature>
<feature type="chain" id="PRO_0000326528" description="Platelet glycoprotein Ib beta chain">
    <location>
        <begin position="27"/>
        <end position="206"/>
    </location>
</feature>
<feature type="topological domain" description="Extracellular" evidence="4">
    <location>
        <begin position="27"/>
        <end position="150"/>
    </location>
</feature>
<feature type="transmembrane region" description="Helical" evidence="4">
    <location>
        <begin position="151"/>
        <end position="171"/>
    </location>
</feature>
<feature type="topological domain" description="Cytoplasmic" evidence="4">
    <location>
        <begin position="172"/>
        <end position="206"/>
    </location>
</feature>
<feature type="domain" description="LRRNT">
    <location>
        <begin position="27"/>
        <end position="55"/>
    </location>
</feature>
<feature type="repeat" description="LRR">
    <location>
        <begin position="60"/>
        <end position="83"/>
    </location>
</feature>
<feature type="domain" description="LRRCT">
    <location>
        <begin position="89"/>
        <end position="143"/>
    </location>
</feature>
<feature type="modified residue" description="Phosphoserine" evidence="3">
    <location>
        <position position="186"/>
    </location>
</feature>
<feature type="modified residue" description="Phosphoserine; by PKA" evidence="2">
    <location>
        <position position="191"/>
    </location>
</feature>
<feature type="modified residue" description="Phosphothreonine" evidence="2">
    <location>
        <position position="193"/>
    </location>
</feature>
<feature type="modified residue" description="Phosphoserine" evidence="3">
    <location>
        <position position="200"/>
    </location>
</feature>
<feature type="disulfide bond" evidence="1">
    <location>
        <begin position="26"/>
        <end position="32"/>
    </location>
</feature>
<feature type="disulfide bond" evidence="1">
    <location>
        <begin position="30"/>
        <end position="39"/>
    </location>
</feature>
<feature type="disulfide bond" evidence="1">
    <location>
        <begin position="93"/>
        <end position="118"/>
    </location>
</feature>
<feature type="disulfide bond" evidence="1">
    <location>
        <begin position="95"/>
        <end position="141"/>
    </location>
</feature>
<feature type="disulfide bond" description="Interchain (with C-608 or C-609 in GP1BA)" evidence="1">
    <location>
        <position position="147"/>
    </location>
</feature>